<evidence type="ECO:0000255" key="1">
    <source>
        <dbReference type="HAMAP-Rule" id="MF_01347"/>
    </source>
</evidence>
<accession>Q8XID4</accession>
<organism>
    <name type="scientific">Clostridium perfringens (strain 13 / Type A)</name>
    <dbReference type="NCBI Taxonomy" id="195102"/>
    <lineage>
        <taxon>Bacteria</taxon>
        <taxon>Bacillati</taxon>
        <taxon>Bacillota</taxon>
        <taxon>Clostridia</taxon>
        <taxon>Eubacteriales</taxon>
        <taxon>Clostridiaceae</taxon>
        <taxon>Clostridium</taxon>
    </lineage>
</organism>
<keyword id="KW-0066">ATP synthesis</keyword>
<keyword id="KW-0067">ATP-binding</keyword>
<keyword id="KW-1003">Cell membrane</keyword>
<keyword id="KW-0139">CF(1)</keyword>
<keyword id="KW-0375">Hydrogen ion transport</keyword>
<keyword id="KW-0406">Ion transport</keyword>
<keyword id="KW-0472">Membrane</keyword>
<keyword id="KW-0547">Nucleotide-binding</keyword>
<keyword id="KW-1185">Reference proteome</keyword>
<keyword id="KW-1278">Translocase</keyword>
<keyword id="KW-0813">Transport</keyword>
<protein>
    <recommendedName>
        <fullName evidence="1">ATP synthase subunit beta</fullName>
        <ecNumber evidence="1">7.1.2.2</ecNumber>
    </recommendedName>
    <alternativeName>
        <fullName evidence="1">ATP synthase F1 sector subunit beta</fullName>
    </alternativeName>
    <alternativeName>
        <fullName evidence="1">F-ATPase subunit beta</fullName>
    </alternativeName>
</protein>
<gene>
    <name evidence="1" type="primary">atpD</name>
    <name evidence="1" type="synonym">atpB</name>
    <name type="ordered locus">CPE2187</name>
</gene>
<sequence>MSNNIGKVVQVIGPVVDIKFANDELPNIFNAIHIKMDDGKILVCEVEQHVGDDIVRTIAMEATEGLRRGVEAVDTGAPISVPVGECVLGRIFNVLGKPLDSGAEVNNEEKYPIHRPAPSFEEQSVVPQMFETGIKVIDLLAPYQRGGKIGLFGGAGVGKTVLIQELINNIAKEHGGLSVFTGVGERSREGNDLYYEMMESGVIKNTALVFGQMNEPPGARMRVALTGLTMAEYFRDQGQDVLLFIDNIFRFSQAGSEVSALLGRIPSAVGYQPTLATEMGALQERITSTTHGSITSVQAVYVPADDLTDPAPATTFNHLDAKTVLSRSIAEIGIYPAVDPLDSSSRILDPRVVGEEHYEVASKVKHILERYKELQDIIAILGVDELADEDKLIVARARRIQKFLSQPFTVAEQFTGMQGRYVPIKETIRGFKEILEGKHDNVPESAFLFAGTIEEVLEKARAMAQ</sequence>
<proteinExistence type="inferred from homology"/>
<dbReference type="EC" id="7.1.2.2" evidence="1"/>
<dbReference type="EMBL" id="BA000016">
    <property type="protein sequence ID" value="BAB81893.1"/>
    <property type="molecule type" value="Genomic_DNA"/>
</dbReference>
<dbReference type="RefSeq" id="WP_003452277.1">
    <property type="nucleotide sequence ID" value="NC_003366.1"/>
</dbReference>
<dbReference type="SMR" id="Q8XID4"/>
<dbReference type="STRING" id="195102.gene:10491466"/>
<dbReference type="GeneID" id="93001270"/>
<dbReference type="KEGG" id="cpe:CPE2187"/>
<dbReference type="HOGENOM" id="CLU_022398_0_2_9"/>
<dbReference type="Proteomes" id="UP000000818">
    <property type="component" value="Chromosome"/>
</dbReference>
<dbReference type="GO" id="GO:0005886">
    <property type="term" value="C:plasma membrane"/>
    <property type="evidence" value="ECO:0007669"/>
    <property type="project" value="UniProtKB-SubCell"/>
</dbReference>
<dbReference type="GO" id="GO:0045259">
    <property type="term" value="C:proton-transporting ATP synthase complex"/>
    <property type="evidence" value="ECO:0007669"/>
    <property type="project" value="UniProtKB-KW"/>
</dbReference>
<dbReference type="GO" id="GO:0005524">
    <property type="term" value="F:ATP binding"/>
    <property type="evidence" value="ECO:0007669"/>
    <property type="project" value="UniProtKB-UniRule"/>
</dbReference>
<dbReference type="GO" id="GO:0016887">
    <property type="term" value="F:ATP hydrolysis activity"/>
    <property type="evidence" value="ECO:0007669"/>
    <property type="project" value="InterPro"/>
</dbReference>
<dbReference type="GO" id="GO:0046933">
    <property type="term" value="F:proton-transporting ATP synthase activity, rotational mechanism"/>
    <property type="evidence" value="ECO:0007669"/>
    <property type="project" value="UniProtKB-UniRule"/>
</dbReference>
<dbReference type="CDD" id="cd18110">
    <property type="entry name" value="ATP-synt_F1_beta_C"/>
    <property type="match status" value="1"/>
</dbReference>
<dbReference type="CDD" id="cd18115">
    <property type="entry name" value="ATP-synt_F1_beta_N"/>
    <property type="match status" value="1"/>
</dbReference>
<dbReference type="CDD" id="cd01133">
    <property type="entry name" value="F1-ATPase_beta_CD"/>
    <property type="match status" value="1"/>
</dbReference>
<dbReference type="FunFam" id="1.10.1140.10:FF:000001">
    <property type="entry name" value="ATP synthase subunit beta"/>
    <property type="match status" value="1"/>
</dbReference>
<dbReference type="FunFam" id="2.40.10.170:FF:000005">
    <property type="entry name" value="ATP synthase subunit beta"/>
    <property type="match status" value="1"/>
</dbReference>
<dbReference type="FunFam" id="3.40.50.300:FF:000004">
    <property type="entry name" value="ATP synthase subunit beta"/>
    <property type="match status" value="1"/>
</dbReference>
<dbReference type="Gene3D" id="2.40.10.170">
    <property type="match status" value="1"/>
</dbReference>
<dbReference type="Gene3D" id="1.10.1140.10">
    <property type="entry name" value="Bovine Mitochondrial F1-atpase, Atp Synthase Beta Chain, Chain D, domain 3"/>
    <property type="match status" value="1"/>
</dbReference>
<dbReference type="Gene3D" id="3.40.50.300">
    <property type="entry name" value="P-loop containing nucleotide triphosphate hydrolases"/>
    <property type="match status" value="1"/>
</dbReference>
<dbReference type="HAMAP" id="MF_01347">
    <property type="entry name" value="ATP_synth_beta_bact"/>
    <property type="match status" value="1"/>
</dbReference>
<dbReference type="InterPro" id="IPR003593">
    <property type="entry name" value="AAA+_ATPase"/>
</dbReference>
<dbReference type="InterPro" id="IPR055190">
    <property type="entry name" value="ATP-synt_VA_C"/>
</dbReference>
<dbReference type="InterPro" id="IPR005722">
    <property type="entry name" value="ATP_synth_F1_bsu"/>
</dbReference>
<dbReference type="InterPro" id="IPR020003">
    <property type="entry name" value="ATPase_a/bsu_AS"/>
</dbReference>
<dbReference type="InterPro" id="IPR050053">
    <property type="entry name" value="ATPase_alpha/beta_chains"/>
</dbReference>
<dbReference type="InterPro" id="IPR004100">
    <property type="entry name" value="ATPase_F1/V1/A1_a/bsu_N"/>
</dbReference>
<dbReference type="InterPro" id="IPR036121">
    <property type="entry name" value="ATPase_F1/V1/A1_a/bsu_N_sf"/>
</dbReference>
<dbReference type="InterPro" id="IPR000194">
    <property type="entry name" value="ATPase_F1/V1/A1_a/bsu_nucl-bd"/>
</dbReference>
<dbReference type="InterPro" id="IPR024034">
    <property type="entry name" value="ATPase_F1/V1_b/a_C"/>
</dbReference>
<dbReference type="InterPro" id="IPR027417">
    <property type="entry name" value="P-loop_NTPase"/>
</dbReference>
<dbReference type="NCBIfam" id="TIGR01039">
    <property type="entry name" value="atpD"/>
    <property type="match status" value="1"/>
</dbReference>
<dbReference type="PANTHER" id="PTHR15184">
    <property type="entry name" value="ATP SYNTHASE"/>
    <property type="match status" value="1"/>
</dbReference>
<dbReference type="PANTHER" id="PTHR15184:SF71">
    <property type="entry name" value="ATP SYNTHASE SUBUNIT BETA, MITOCHONDRIAL"/>
    <property type="match status" value="1"/>
</dbReference>
<dbReference type="Pfam" id="PF00006">
    <property type="entry name" value="ATP-synt_ab"/>
    <property type="match status" value="1"/>
</dbReference>
<dbReference type="Pfam" id="PF02874">
    <property type="entry name" value="ATP-synt_ab_N"/>
    <property type="match status" value="1"/>
</dbReference>
<dbReference type="Pfam" id="PF22919">
    <property type="entry name" value="ATP-synt_VA_C"/>
    <property type="match status" value="1"/>
</dbReference>
<dbReference type="SMART" id="SM00382">
    <property type="entry name" value="AAA"/>
    <property type="match status" value="1"/>
</dbReference>
<dbReference type="SUPFAM" id="SSF47917">
    <property type="entry name" value="C-terminal domain of alpha and beta subunits of F1 ATP synthase"/>
    <property type="match status" value="1"/>
</dbReference>
<dbReference type="SUPFAM" id="SSF50615">
    <property type="entry name" value="N-terminal domain of alpha and beta subunits of F1 ATP synthase"/>
    <property type="match status" value="1"/>
</dbReference>
<dbReference type="SUPFAM" id="SSF52540">
    <property type="entry name" value="P-loop containing nucleoside triphosphate hydrolases"/>
    <property type="match status" value="1"/>
</dbReference>
<dbReference type="PROSITE" id="PS00152">
    <property type="entry name" value="ATPASE_ALPHA_BETA"/>
    <property type="match status" value="1"/>
</dbReference>
<name>ATPB_CLOPE</name>
<comment type="function">
    <text evidence="1">Produces ATP from ADP in the presence of a proton gradient across the membrane. The catalytic sites are hosted primarily by the beta subunits.</text>
</comment>
<comment type="catalytic activity">
    <reaction evidence="1">
        <text>ATP + H2O + 4 H(+)(in) = ADP + phosphate + 5 H(+)(out)</text>
        <dbReference type="Rhea" id="RHEA:57720"/>
        <dbReference type="ChEBI" id="CHEBI:15377"/>
        <dbReference type="ChEBI" id="CHEBI:15378"/>
        <dbReference type="ChEBI" id="CHEBI:30616"/>
        <dbReference type="ChEBI" id="CHEBI:43474"/>
        <dbReference type="ChEBI" id="CHEBI:456216"/>
        <dbReference type="EC" id="7.1.2.2"/>
    </reaction>
</comment>
<comment type="subunit">
    <text evidence="1">F-type ATPases have 2 components, CF(1) - the catalytic core - and CF(0) - the membrane proton channel. CF(1) has five subunits: alpha(3), beta(3), gamma(1), delta(1), epsilon(1). CF(0) has three main subunits: a(1), b(2) and c(9-12). The alpha and beta chains form an alternating ring which encloses part of the gamma chain. CF(1) is attached to CF(0) by a central stalk formed by the gamma and epsilon chains, while a peripheral stalk is formed by the delta and b chains.</text>
</comment>
<comment type="subcellular location">
    <subcellularLocation>
        <location evidence="1">Cell membrane</location>
        <topology evidence="1">Peripheral membrane protein</topology>
    </subcellularLocation>
</comment>
<comment type="similarity">
    <text evidence="1">Belongs to the ATPase alpha/beta chains family.</text>
</comment>
<reference key="1">
    <citation type="journal article" date="2002" name="Proc. Natl. Acad. Sci. U.S.A.">
        <title>Complete genome sequence of Clostridium perfringens, an anaerobic flesh-eater.</title>
        <authorList>
            <person name="Shimizu T."/>
            <person name="Ohtani K."/>
            <person name="Hirakawa H."/>
            <person name="Ohshima K."/>
            <person name="Yamashita A."/>
            <person name="Shiba T."/>
            <person name="Ogasawara N."/>
            <person name="Hattori M."/>
            <person name="Kuhara S."/>
            <person name="Hayashi H."/>
        </authorList>
    </citation>
    <scope>NUCLEOTIDE SEQUENCE [LARGE SCALE GENOMIC DNA]</scope>
    <source>
        <strain>13 / Type A</strain>
    </source>
</reference>
<feature type="chain" id="PRO_0000144434" description="ATP synthase subunit beta">
    <location>
        <begin position="1"/>
        <end position="465"/>
    </location>
</feature>
<feature type="binding site" evidence="1">
    <location>
        <begin position="153"/>
        <end position="160"/>
    </location>
    <ligand>
        <name>ATP</name>
        <dbReference type="ChEBI" id="CHEBI:30616"/>
    </ligand>
</feature>